<protein>
    <recommendedName>
        <fullName evidence="1">Phosphoglucosamine mutase</fullName>
        <ecNumber evidence="1">5.4.2.10</ecNumber>
    </recommendedName>
</protein>
<name>GLMM_METRJ</name>
<keyword id="KW-0413">Isomerase</keyword>
<keyword id="KW-0460">Magnesium</keyword>
<keyword id="KW-0479">Metal-binding</keyword>
<keyword id="KW-0597">Phosphoprotein</keyword>
<gene>
    <name evidence="1" type="primary">glmM</name>
    <name type="ordered locus">Mrad2831_4337</name>
</gene>
<reference key="1">
    <citation type="submission" date="2008-03" db="EMBL/GenBank/DDBJ databases">
        <title>Complete sequence of chromosome of Methylobacterium radiotolerans JCM 2831.</title>
        <authorList>
            <consortium name="US DOE Joint Genome Institute"/>
            <person name="Copeland A."/>
            <person name="Lucas S."/>
            <person name="Lapidus A."/>
            <person name="Glavina del Rio T."/>
            <person name="Dalin E."/>
            <person name="Tice H."/>
            <person name="Bruce D."/>
            <person name="Goodwin L."/>
            <person name="Pitluck S."/>
            <person name="Kiss H."/>
            <person name="Brettin T."/>
            <person name="Detter J.C."/>
            <person name="Han C."/>
            <person name="Kuske C.R."/>
            <person name="Schmutz J."/>
            <person name="Larimer F."/>
            <person name="Land M."/>
            <person name="Hauser L."/>
            <person name="Kyrpides N."/>
            <person name="Mikhailova N."/>
            <person name="Marx C.J."/>
            <person name="Richardson P."/>
        </authorList>
    </citation>
    <scope>NUCLEOTIDE SEQUENCE [LARGE SCALE GENOMIC DNA]</scope>
    <source>
        <strain>ATCC 27329 / DSM 1819 / JCM 2831 / NBRC 15690 / NCIMB 10815 / 0-1</strain>
    </source>
</reference>
<sequence length="447" mass="48316">MVRKYFGTDGIRGRANGVITPELALKVGQAAGLVFQRGDHRHRVVIGKDTRLSGYMIETALVAGFTSVGMDVLLLGPVPTPAVAMLTRSMRADLGVMISASHNPFEDNGIKLFGPDGFKLNDAIEHEIEGLIDADMHKRLSGSNDLGRAKRIESVHARYIEFAKRTLPRQVTLDGLRVVVDCANGAAYRVAPETLWELGAEVIAIGTEPDGFNINRDVGSTAPAALIDMVRERRADIGIALDGDADRVLIVDEKGQVVDGDQLMAVVARSWKEDERLTQPGVVATIMSNLGLERFLGGLGLSLARTAVGDRYVLEHMRAHGYNLGGEQSGHIIMSDYTTTGDGLVAALQLLSVVQRQNRPVSEVCHCFDPLPQILKNVRYRSGEPLREDSVVSAIEHARERLGNAGRLVIRPSGTEPVIRVMAEGDDRGLVNAVVDEVVDAVTRAAA</sequence>
<comment type="function">
    <text evidence="1">Catalyzes the conversion of glucosamine-6-phosphate to glucosamine-1-phosphate.</text>
</comment>
<comment type="catalytic activity">
    <reaction evidence="1">
        <text>alpha-D-glucosamine 1-phosphate = D-glucosamine 6-phosphate</text>
        <dbReference type="Rhea" id="RHEA:23424"/>
        <dbReference type="ChEBI" id="CHEBI:58516"/>
        <dbReference type="ChEBI" id="CHEBI:58725"/>
        <dbReference type="EC" id="5.4.2.10"/>
    </reaction>
</comment>
<comment type="cofactor">
    <cofactor evidence="1">
        <name>Mg(2+)</name>
        <dbReference type="ChEBI" id="CHEBI:18420"/>
    </cofactor>
    <text evidence="1">Binds 1 Mg(2+) ion per subunit.</text>
</comment>
<comment type="PTM">
    <text evidence="1">Activated by phosphorylation.</text>
</comment>
<comment type="similarity">
    <text evidence="1">Belongs to the phosphohexose mutase family.</text>
</comment>
<organism>
    <name type="scientific">Methylobacterium radiotolerans (strain ATCC 27329 / DSM 1819 / JCM 2831 / NBRC 15690 / NCIMB 10815 / 0-1)</name>
    <dbReference type="NCBI Taxonomy" id="426355"/>
    <lineage>
        <taxon>Bacteria</taxon>
        <taxon>Pseudomonadati</taxon>
        <taxon>Pseudomonadota</taxon>
        <taxon>Alphaproteobacteria</taxon>
        <taxon>Hyphomicrobiales</taxon>
        <taxon>Methylobacteriaceae</taxon>
        <taxon>Methylobacterium</taxon>
    </lineage>
</organism>
<dbReference type="EC" id="5.4.2.10" evidence="1"/>
<dbReference type="EMBL" id="CP001001">
    <property type="protein sequence ID" value="ACB26303.1"/>
    <property type="molecule type" value="Genomic_DNA"/>
</dbReference>
<dbReference type="SMR" id="B1M3G3"/>
<dbReference type="STRING" id="426355.Mrad2831_4337"/>
<dbReference type="KEGG" id="mrd:Mrad2831_4337"/>
<dbReference type="eggNOG" id="COG1109">
    <property type="taxonomic scope" value="Bacteria"/>
</dbReference>
<dbReference type="HOGENOM" id="CLU_016950_7_0_5"/>
<dbReference type="Proteomes" id="UP000006589">
    <property type="component" value="Chromosome"/>
</dbReference>
<dbReference type="GO" id="GO:0005829">
    <property type="term" value="C:cytosol"/>
    <property type="evidence" value="ECO:0007669"/>
    <property type="project" value="TreeGrafter"/>
</dbReference>
<dbReference type="GO" id="GO:0000287">
    <property type="term" value="F:magnesium ion binding"/>
    <property type="evidence" value="ECO:0007669"/>
    <property type="project" value="UniProtKB-UniRule"/>
</dbReference>
<dbReference type="GO" id="GO:0008966">
    <property type="term" value="F:phosphoglucosamine mutase activity"/>
    <property type="evidence" value="ECO:0007669"/>
    <property type="project" value="UniProtKB-UniRule"/>
</dbReference>
<dbReference type="GO" id="GO:0004615">
    <property type="term" value="F:phosphomannomutase activity"/>
    <property type="evidence" value="ECO:0007669"/>
    <property type="project" value="TreeGrafter"/>
</dbReference>
<dbReference type="GO" id="GO:0005975">
    <property type="term" value="P:carbohydrate metabolic process"/>
    <property type="evidence" value="ECO:0007669"/>
    <property type="project" value="InterPro"/>
</dbReference>
<dbReference type="GO" id="GO:0009252">
    <property type="term" value="P:peptidoglycan biosynthetic process"/>
    <property type="evidence" value="ECO:0007669"/>
    <property type="project" value="TreeGrafter"/>
</dbReference>
<dbReference type="GO" id="GO:0006048">
    <property type="term" value="P:UDP-N-acetylglucosamine biosynthetic process"/>
    <property type="evidence" value="ECO:0007669"/>
    <property type="project" value="TreeGrafter"/>
</dbReference>
<dbReference type="CDD" id="cd05802">
    <property type="entry name" value="GlmM"/>
    <property type="match status" value="1"/>
</dbReference>
<dbReference type="FunFam" id="3.30.310.50:FF:000001">
    <property type="entry name" value="Phosphoglucosamine mutase"/>
    <property type="match status" value="1"/>
</dbReference>
<dbReference type="FunFam" id="3.40.120.10:FF:000001">
    <property type="entry name" value="Phosphoglucosamine mutase"/>
    <property type="match status" value="1"/>
</dbReference>
<dbReference type="FunFam" id="3.40.120.10:FF:000002">
    <property type="entry name" value="Phosphoglucosamine mutase"/>
    <property type="match status" value="1"/>
</dbReference>
<dbReference type="Gene3D" id="3.40.120.10">
    <property type="entry name" value="Alpha-D-Glucose-1,6-Bisphosphate, subunit A, domain 3"/>
    <property type="match status" value="3"/>
</dbReference>
<dbReference type="Gene3D" id="3.30.310.50">
    <property type="entry name" value="Alpha-D-phosphohexomutase, C-terminal domain"/>
    <property type="match status" value="1"/>
</dbReference>
<dbReference type="HAMAP" id="MF_01554_B">
    <property type="entry name" value="GlmM_B"/>
    <property type="match status" value="1"/>
</dbReference>
<dbReference type="InterPro" id="IPR005844">
    <property type="entry name" value="A-D-PHexomutase_a/b/a-I"/>
</dbReference>
<dbReference type="InterPro" id="IPR016055">
    <property type="entry name" value="A-D-PHexomutase_a/b/a-I/II/III"/>
</dbReference>
<dbReference type="InterPro" id="IPR005845">
    <property type="entry name" value="A-D-PHexomutase_a/b/a-II"/>
</dbReference>
<dbReference type="InterPro" id="IPR005846">
    <property type="entry name" value="A-D-PHexomutase_a/b/a-III"/>
</dbReference>
<dbReference type="InterPro" id="IPR005843">
    <property type="entry name" value="A-D-PHexomutase_C"/>
</dbReference>
<dbReference type="InterPro" id="IPR036900">
    <property type="entry name" value="A-D-PHexomutase_C_sf"/>
</dbReference>
<dbReference type="InterPro" id="IPR016066">
    <property type="entry name" value="A-D-PHexomutase_CS"/>
</dbReference>
<dbReference type="InterPro" id="IPR005841">
    <property type="entry name" value="Alpha-D-phosphohexomutase_SF"/>
</dbReference>
<dbReference type="InterPro" id="IPR006352">
    <property type="entry name" value="GlmM_bact"/>
</dbReference>
<dbReference type="InterPro" id="IPR050060">
    <property type="entry name" value="Phosphoglucosamine_mutase"/>
</dbReference>
<dbReference type="NCBIfam" id="TIGR01455">
    <property type="entry name" value="glmM"/>
    <property type="match status" value="1"/>
</dbReference>
<dbReference type="NCBIfam" id="NF008139">
    <property type="entry name" value="PRK10887.1"/>
    <property type="match status" value="1"/>
</dbReference>
<dbReference type="PANTHER" id="PTHR42946:SF1">
    <property type="entry name" value="PHOSPHOGLUCOMUTASE (ALPHA-D-GLUCOSE-1,6-BISPHOSPHATE-DEPENDENT)"/>
    <property type="match status" value="1"/>
</dbReference>
<dbReference type="PANTHER" id="PTHR42946">
    <property type="entry name" value="PHOSPHOHEXOSE MUTASE"/>
    <property type="match status" value="1"/>
</dbReference>
<dbReference type="Pfam" id="PF02878">
    <property type="entry name" value="PGM_PMM_I"/>
    <property type="match status" value="1"/>
</dbReference>
<dbReference type="Pfam" id="PF02879">
    <property type="entry name" value="PGM_PMM_II"/>
    <property type="match status" value="1"/>
</dbReference>
<dbReference type="Pfam" id="PF02880">
    <property type="entry name" value="PGM_PMM_III"/>
    <property type="match status" value="1"/>
</dbReference>
<dbReference type="Pfam" id="PF00408">
    <property type="entry name" value="PGM_PMM_IV"/>
    <property type="match status" value="1"/>
</dbReference>
<dbReference type="PRINTS" id="PR00509">
    <property type="entry name" value="PGMPMM"/>
</dbReference>
<dbReference type="SUPFAM" id="SSF55957">
    <property type="entry name" value="Phosphoglucomutase, C-terminal domain"/>
    <property type="match status" value="1"/>
</dbReference>
<dbReference type="SUPFAM" id="SSF53738">
    <property type="entry name" value="Phosphoglucomutase, first 3 domains"/>
    <property type="match status" value="3"/>
</dbReference>
<dbReference type="PROSITE" id="PS00710">
    <property type="entry name" value="PGM_PMM"/>
    <property type="match status" value="1"/>
</dbReference>
<feature type="chain" id="PRO_1000201119" description="Phosphoglucosamine mutase">
    <location>
        <begin position="1"/>
        <end position="447"/>
    </location>
</feature>
<feature type="active site" description="Phosphoserine intermediate" evidence="1">
    <location>
        <position position="101"/>
    </location>
</feature>
<feature type="binding site" description="via phosphate group" evidence="1">
    <location>
        <position position="101"/>
    </location>
    <ligand>
        <name>Mg(2+)</name>
        <dbReference type="ChEBI" id="CHEBI:18420"/>
    </ligand>
</feature>
<feature type="binding site" evidence="1">
    <location>
        <position position="242"/>
    </location>
    <ligand>
        <name>Mg(2+)</name>
        <dbReference type="ChEBI" id="CHEBI:18420"/>
    </ligand>
</feature>
<feature type="binding site" evidence="1">
    <location>
        <position position="244"/>
    </location>
    <ligand>
        <name>Mg(2+)</name>
        <dbReference type="ChEBI" id="CHEBI:18420"/>
    </ligand>
</feature>
<feature type="binding site" evidence="1">
    <location>
        <position position="246"/>
    </location>
    <ligand>
        <name>Mg(2+)</name>
        <dbReference type="ChEBI" id="CHEBI:18420"/>
    </ligand>
</feature>
<feature type="modified residue" description="Phosphoserine" evidence="1">
    <location>
        <position position="101"/>
    </location>
</feature>
<evidence type="ECO:0000255" key="1">
    <source>
        <dbReference type="HAMAP-Rule" id="MF_01554"/>
    </source>
</evidence>
<proteinExistence type="inferred from homology"/>
<accession>B1M3G3</accession>